<name>HISX1_NOSS1</name>
<organism>
    <name type="scientific">Nostoc sp. (strain PCC 7120 / SAG 25.82 / UTEX 2576)</name>
    <dbReference type="NCBI Taxonomy" id="103690"/>
    <lineage>
        <taxon>Bacteria</taxon>
        <taxon>Bacillati</taxon>
        <taxon>Cyanobacteriota</taxon>
        <taxon>Cyanophyceae</taxon>
        <taxon>Nostocales</taxon>
        <taxon>Nostocaceae</taxon>
        <taxon>Nostoc</taxon>
    </lineage>
</organism>
<dbReference type="EC" id="1.1.1.23"/>
<dbReference type="EMBL" id="BA000019">
    <property type="protein sequence ID" value="BAB74755.1"/>
    <property type="molecule type" value="Genomic_DNA"/>
</dbReference>
<dbReference type="PIR" id="AI2187">
    <property type="entry name" value="AI2187"/>
</dbReference>
<dbReference type="SMR" id="Q8YSM8"/>
<dbReference type="STRING" id="103690.gene:10495092"/>
<dbReference type="KEGG" id="ana:alr3056"/>
<dbReference type="eggNOG" id="COG0141">
    <property type="taxonomic scope" value="Bacteria"/>
</dbReference>
<dbReference type="OrthoDB" id="9805269at2"/>
<dbReference type="UniPathway" id="UPA00031">
    <property type="reaction ID" value="UER00014"/>
</dbReference>
<dbReference type="Proteomes" id="UP000002483">
    <property type="component" value="Chromosome"/>
</dbReference>
<dbReference type="GO" id="GO:0005829">
    <property type="term" value="C:cytosol"/>
    <property type="evidence" value="ECO:0007669"/>
    <property type="project" value="TreeGrafter"/>
</dbReference>
<dbReference type="GO" id="GO:0004399">
    <property type="term" value="F:histidinol dehydrogenase activity"/>
    <property type="evidence" value="ECO:0007669"/>
    <property type="project" value="UniProtKB-UniRule"/>
</dbReference>
<dbReference type="GO" id="GO:0051287">
    <property type="term" value="F:NAD binding"/>
    <property type="evidence" value="ECO:0007669"/>
    <property type="project" value="InterPro"/>
</dbReference>
<dbReference type="GO" id="GO:0008270">
    <property type="term" value="F:zinc ion binding"/>
    <property type="evidence" value="ECO:0007669"/>
    <property type="project" value="UniProtKB-UniRule"/>
</dbReference>
<dbReference type="GO" id="GO:0000105">
    <property type="term" value="P:L-histidine biosynthetic process"/>
    <property type="evidence" value="ECO:0007669"/>
    <property type="project" value="UniProtKB-UniRule"/>
</dbReference>
<dbReference type="CDD" id="cd06572">
    <property type="entry name" value="Histidinol_dh"/>
    <property type="match status" value="1"/>
</dbReference>
<dbReference type="FunFam" id="3.40.50.1980:FF:000001">
    <property type="entry name" value="Histidinol dehydrogenase"/>
    <property type="match status" value="1"/>
</dbReference>
<dbReference type="FunFam" id="3.40.50.1980:FF:000026">
    <property type="entry name" value="Histidinol dehydrogenase"/>
    <property type="match status" value="1"/>
</dbReference>
<dbReference type="Gene3D" id="1.20.5.1300">
    <property type="match status" value="1"/>
</dbReference>
<dbReference type="Gene3D" id="3.40.50.1980">
    <property type="entry name" value="Nitrogenase molybdenum iron protein domain"/>
    <property type="match status" value="2"/>
</dbReference>
<dbReference type="HAMAP" id="MF_01024">
    <property type="entry name" value="HisD"/>
    <property type="match status" value="1"/>
</dbReference>
<dbReference type="InterPro" id="IPR016161">
    <property type="entry name" value="Ald_DH/histidinol_DH"/>
</dbReference>
<dbReference type="InterPro" id="IPR001692">
    <property type="entry name" value="Histidinol_DH_CS"/>
</dbReference>
<dbReference type="InterPro" id="IPR022695">
    <property type="entry name" value="Histidinol_DH_monofunct"/>
</dbReference>
<dbReference type="InterPro" id="IPR012131">
    <property type="entry name" value="Hstdl_DH"/>
</dbReference>
<dbReference type="NCBIfam" id="TIGR00069">
    <property type="entry name" value="hisD"/>
    <property type="match status" value="1"/>
</dbReference>
<dbReference type="PANTHER" id="PTHR21256:SF2">
    <property type="entry name" value="HISTIDINE BIOSYNTHESIS TRIFUNCTIONAL PROTEIN"/>
    <property type="match status" value="1"/>
</dbReference>
<dbReference type="PANTHER" id="PTHR21256">
    <property type="entry name" value="HISTIDINOL DEHYDROGENASE HDH"/>
    <property type="match status" value="1"/>
</dbReference>
<dbReference type="Pfam" id="PF00815">
    <property type="entry name" value="Histidinol_dh"/>
    <property type="match status" value="1"/>
</dbReference>
<dbReference type="PIRSF" id="PIRSF000099">
    <property type="entry name" value="Histidinol_dh"/>
    <property type="match status" value="1"/>
</dbReference>
<dbReference type="PRINTS" id="PR00083">
    <property type="entry name" value="HOLDHDRGNASE"/>
</dbReference>
<dbReference type="SUPFAM" id="SSF53720">
    <property type="entry name" value="ALDH-like"/>
    <property type="match status" value="1"/>
</dbReference>
<dbReference type="PROSITE" id="PS00611">
    <property type="entry name" value="HISOL_DEHYDROGENASE"/>
    <property type="match status" value="1"/>
</dbReference>
<accession>Q8YSM8</accession>
<evidence type="ECO:0000250" key="1"/>
<evidence type="ECO:0000305" key="2"/>
<reference key="1">
    <citation type="journal article" date="2001" name="DNA Res.">
        <title>Complete genomic sequence of the filamentous nitrogen-fixing cyanobacterium Anabaena sp. strain PCC 7120.</title>
        <authorList>
            <person name="Kaneko T."/>
            <person name="Nakamura Y."/>
            <person name="Wolk C.P."/>
            <person name="Kuritz T."/>
            <person name="Sasamoto S."/>
            <person name="Watanabe A."/>
            <person name="Iriguchi M."/>
            <person name="Ishikawa A."/>
            <person name="Kawashima K."/>
            <person name="Kimura T."/>
            <person name="Kishida Y."/>
            <person name="Kohara M."/>
            <person name="Matsumoto M."/>
            <person name="Matsuno A."/>
            <person name="Muraki A."/>
            <person name="Nakazaki N."/>
            <person name="Shimpo S."/>
            <person name="Sugimoto M."/>
            <person name="Takazawa M."/>
            <person name="Yamada M."/>
            <person name="Yasuda M."/>
            <person name="Tabata S."/>
        </authorList>
    </citation>
    <scope>NUCLEOTIDE SEQUENCE [LARGE SCALE GENOMIC DNA]</scope>
    <source>
        <strain>PCC 7120 / SAG 25.82 / UTEX 2576</strain>
    </source>
</reference>
<sequence>MLVLKTTDKEFSPRFQSLVSDRREATVDVSGTVRDILAHVKARGDAAVQEYTSRFDHYRPHSHHLSAAFIAEQAAKCSDEVKAALELAAERISSFHQKQLPQDIGYTDTAGVKLGLNWVALSQVGIYVPGGRASYPSSVLMNALPAKIAGVERIVMTVPMPHGEINPAVLAAAQVAGVTEIYSIGGAQAVGALAYGTETITPVDKIVGPGNAYVAEAKRQVFGTVGIDSIAGPSEILVVADRQNNPEWIAWDLLSQAEHDPSAQSILITDSESFAQQVIAAVEQILTTLPSQKVASSSWQNHGAVIIVRDLAESIPLLNQLAPEHVELCVDNPQLLASQIKCAGSLFLGRYTPEAIGDYLGGPNHVLPTSRSARFASGLSVYDFLKRITYLECNQAALQKIGQSAVTLAETEGLPAHAGSVAVRLQGLKDM</sequence>
<proteinExistence type="inferred from homology"/>
<keyword id="KW-0028">Amino-acid biosynthesis</keyword>
<keyword id="KW-0368">Histidine biosynthesis</keyword>
<keyword id="KW-0479">Metal-binding</keyword>
<keyword id="KW-0520">NAD</keyword>
<keyword id="KW-0560">Oxidoreductase</keyword>
<keyword id="KW-1185">Reference proteome</keyword>
<keyword id="KW-0862">Zinc</keyword>
<comment type="function">
    <text evidence="1">Catalyzes the sequential NAD-dependent oxidations of L-histidinol to L-histidinaldehyde and then to L-histidine.</text>
</comment>
<comment type="catalytic activity">
    <reaction>
        <text>L-histidinol + 2 NAD(+) + H2O = L-histidine + 2 NADH + 3 H(+)</text>
        <dbReference type="Rhea" id="RHEA:20641"/>
        <dbReference type="ChEBI" id="CHEBI:15377"/>
        <dbReference type="ChEBI" id="CHEBI:15378"/>
        <dbReference type="ChEBI" id="CHEBI:57540"/>
        <dbReference type="ChEBI" id="CHEBI:57595"/>
        <dbReference type="ChEBI" id="CHEBI:57699"/>
        <dbReference type="ChEBI" id="CHEBI:57945"/>
        <dbReference type="EC" id="1.1.1.23"/>
    </reaction>
</comment>
<comment type="cofactor">
    <cofactor evidence="1">
        <name>Zn(2+)</name>
        <dbReference type="ChEBI" id="CHEBI:29105"/>
    </cofactor>
    <text evidence="1">Binds 1 zinc ion per subunit.</text>
</comment>
<comment type="pathway">
    <text>Amino-acid biosynthesis; L-histidine biosynthesis; L-histidine from 5-phospho-alpha-D-ribose 1-diphosphate: step 9/9.</text>
</comment>
<comment type="similarity">
    <text evidence="2">Belongs to the histidinol dehydrogenase family.</text>
</comment>
<feature type="chain" id="PRO_0000135715" description="Histidinol dehydrogenase 1">
    <location>
        <begin position="1"/>
        <end position="431"/>
    </location>
</feature>
<feature type="active site" description="Proton acceptor" evidence="1">
    <location>
        <position position="324"/>
    </location>
</feature>
<feature type="active site" description="Proton acceptor" evidence="1">
    <location>
        <position position="325"/>
    </location>
</feature>
<feature type="binding site" evidence="1">
    <location>
        <position position="127"/>
    </location>
    <ligand>
        <name>NAD(+)</name>
        <dbReference type="ChEBI" id="CHEBI:57540"/>
    </ligand>
</feature>
<feature type="binding site" evidence="1">
    <location>
        <position position="188"/>
    </location>
    <ligand>
        <name>NAD(+)</name>
        <dbReference type="ChEBI" id="CHEBI:57540"/>
    </ligand>
</feature>
<feature type="binding site" evidence="1">
    <location>
        <position position="211"/>
    </location>
    <ligand>
        <name>NAD(+)</name>
        <dbReference type="ChEBI" id="CHEBI:57540"/>
    </ligand>
</feature>
<feature type="binding site" evidence="1">
    <location>
        <position position="234"/>
    </location>
    <ligand>
        <name>substrate</name>
    </ligand>
</feature>
<feature type="binding site" evidence="1">
    <location>
        <position position="256"/>
    </location>
    <ligand>
        <name>substrate</name>
    </ligand>
</feature>
<feature type="binding site" evidence="1">
    <location>
        <position position="256"/>
    </location>
    <ligand>
        <name>Zn(2+)</name>
        <dbReference type="ChEBI" id="CHEBI:29105"/>
    </ligand>
</feature>
<feature type="binding site" evidence="1">
    <location>
        <position position="259"/>
    </location>
    <ligand>
        <name>substrate</name>
    </ligand>
</feature>
<feature type="binding site" evidence="1">
    <location>
        <position position="259"/>
    </location>
    <ligand>
        <name>Zn(2+)</name>
        <dbReference type="ChEBI" id="CHEBI:29105"/>
    </ligand>
</feature>
<feature type="binding site" evidence="1">
    <location>
        <position position="325"/>
    </location>
    <ligand>
        <name>substrate</name>
    </ligand>
</feature>
<feature type="binding site" evidence="1">
    <location>
        <position position="358"/>
    </location>
    <ligand>
        <name>substrate</name>
    </ligand>
</feature>
<feature type="binding site" evidence="1">
    <location>
        <position position="358"/>
    </location>
    <ligand>
        <name>Zn(2+)</name>
        <dbReference type="ChEBI" id="CHEBI:29105"/>
    </ligand>
</feature>
<feature type="binding site" evidence="1">
    <location>
        <position position="412"/>
    </location>
    <ligand>
        <name>substrate</name>
    </ligand>
</feature>
<feature type="binding site" evidence="1">
    <location>
        <position position="417"/>
    </location>
    <ligand>
        <name>substrate</name>
    </ligand>
</feature>
<feature type="binding site" evidence="1">
    <location>
        <position position="417"/>
    </location>
    <ligand>
        <name>Zn(2+)</name>
        <dbReference type="ChEBI" id="CHEBI:29105"/>
    </ligand>
</feature>
<protein>
    <recommendedName>
        <fullName>Histidinol dehydrogenase 1</fullName>
        <shortName>HDH 1</shortName>
        <ecNumber>1.1.1.23</ecNumber>
    </recommendedName>
</protein>
<gene>
    <name type="primary">hisD1</name>
    <name type="ordered locus">alr3056</name>
</gene>